<comment type="function">
    <text evidence="2 3">Plant-specific actin binding protein that bundles and stabilizes microfilaments (MFs). Has no nucleation or capping activity. Regulates MF reorganization during stomatal closure. The binding to F-actin is insensitive to Ca(2+) and pH. Binds weakly to inositol phosphates (PubMed:22356912).</text>
</comment>
<comment type="subunit">
    <text evidence="3">Dimer. Dimerization is required for actin-binding activity.</text>
</comment>
<comment type="subcellular location">
    <subcellularLocation>
        <location evidence="2">Cytoplasm</location>
        <location evidence="2">Cytoskeleton</location>
    </subcellularLocation>
</comment>
<comment type="tissue specificity">
    <text evidence="2">Expressed in roots, stems, leaves, flowers, siliques and guard cells.</text>
</comment>
<comment type="domain">
    <text evidence="2">The NT5 region (73-100) is required for actin-binding activity.</text>
</comment>
<comment type="disruption phenotype">
    <text evidence="2">Defect in stomatal movment and hypersensitivity to drought stress.</text>
</comment>
<comment type="similarity">
    <text evidence="5">Belongs to the SCAB family.</text>
</comment>
<keyword id="KW-0002">3D-structure</keyword>
<keyword id="KW-0009">Actin-binding</keyword>
<keyword id="KW-0175">Coiled coil</keyword>
<keyword id="KW-0963">Cytoplasm</keyword>
<keyword id="KW-0206">Cytoskeleton</keyword>
<keyword id="KW-1185">Reference proteome</keyword>
<sequence length="496" mass="55418">MTRVTRDFRDSLQRDGVPAVSADVKFASSRFPNYRIGANDQIFDVKDDPKVMSMKEVVARETAQLMDQQKRLSVRDLAHKFEKGLAAAAKLSEEAKLKEATSLEKHVLLKKLRDALESLRGRVAGRNKDDVEEAIAMVEALAVQLTQREGELFIEKAEVKKLASFLKQASEDAKKLVDEERAFARAEIESARAAVQRVEEALREHEQMSRASGKQDMEDLMKEVQEARRIKMLHQPSRVMDMEYELRALRNQLAEKSKHFLQLQKKLAMCRKSEENISLVYEIDGTEALGSCLRVRPCSNDAPDLSKCTIQWYRSSSDGSKKELISGATKSVYAPEPFDVGRVLHADIIYDGHSLSLSTVGKIDPAAGLGSYVEALVRKHDVDFNVVVTQMSGEDHTSESIHLFHVGKMRIKLCKGKTVIAKEYYSSAMQLCGVRGGGNAAAQALYWQAKKGVSFVIAFESERERNAAIMLARRFACDCNVTLAGPEDRTETGQSP</sequence>
<evidence type="ECO:0000255" key="1"/>
<evidence type="ECO:0000269" key="2">
    <source>
    </source>
</evidence>
<evidence type="ECO:0000269" key="3">
    <source>
    </source>
</evidence>
<evidence type="ECO:0000303" key="4">
    <source>
    </source>
</evidence>
<evidence type="ECO:0000305" key="5"/>
<evidence type="ECO:0000312" key="6">
    <source>
        <dbReference type="Araport" id="AT2G26770"/>
    </source>
</evidence>
<evidence type="ECO:0000312" key="7">
    <source>
        <dbReference type="EMBL" id="AAB95312.1"/>
    </source>
</evidence>
<evidence type="ECO:0000312" key="8">
    <source>
        <dbReference type="Proteomes" id="UP000006548"/>
    </source>
</evidence>
<evidence type="ECO:0007829" key="9">
    <source>
        <dbReference type="PDB" id="4DIX"/>
    </source>
</evidence>
<evidence type="ECO:0007829" key="10">
    <source>
        <dbReference type="PDB" id="4DJG"/>
    </source>
</evidence>
<protein>
    <recommendedName>
        <fullName evidence="4">Stomatal closure-related actin-binding protein 1</fullName>
    </recommendedName>
</protein>
<gene>
    <name evidence="4" type="primary">SCAB1</name>
    <name evidence="6" type="ordered locus">At2g26770</name>
    <name evidence="7" type="ORF">F18A8.14</name>
</gene>
<accession>O48791</accession>
<dbReference type="EMBL" id="AC003105">
    <property type="protein sequence ID" value="AAB95312.1"/>
    <property type="molecule type" value="Genomic_DNA"/>
</dbReference>
<dbReference type="EMBL" id="CP002685">
    <property type="protein sequence ID" value="AEC07884.1"/>
    <property type="molecule type" value="Genomic_DNA"/>
</dbReference>
<dbReference type="EMBL" id="CP002685">
    <property type="protein sequence ID" value="AEC07885.1"/>
    <property type="molecule type" value="Genomic_DNA"/>
</dbReference>
<dbReference type="EMBL" id="CP002685">
    <property type="protein sequence ID" value="ANM61588.1"/>
    <property type="molecule type" value="Genomic_DNA"/>
</dbReference>
<dbReference type="EMBL" id="AY136349">
    <property type="protein sequence ID" value="AAM97015.1"/>
    <property type="molecule type" value="mRNA"/>
</dbReference>
<dbReference type="EMBL" id="BT000193">
    <property type="protein sequence ID" value="AAN15512.1"/>
    <property type="molecule type" value="mRNA"/>
</dbReference>
<dbReference type="EMBL" id="AK118842">
    <property type="protein sequence ID" value="BAC43431.1"/>
    <property type="molecule type" value="mRNA"/>
</dbReference>
<dbReference type="PIR" id="F84664">
    <property type="entry name" value="F84664"/>
</dbReference>
<dbReference type="RefSeq" id="NP_001323795.1">
    <property type="nucleotide sequence ID" value="NM_001336082.1"/>
</dbReference>
<dbReference type="RefSeq" id="NP_180245.1">
    <property type="nucleotide sequence ID" value="NM_128234.4"/>
</dbReference>
<dbReference type="RefSeq" id="NP_850085.1">
    <property type="nucleotide sequence ID" value="NM_179754.2"/>
</dbReference>
<dbReference type="PDB" id="4DIX">
    <property type="method" value="X-ray"/>
    <property type="resolution" value="1.70 A"/>
    <property type="chains" value="A/B=272-496"/>
</dbReference>
<dbReference type="PDB" id="4DJG">
    <property type="method" value="X-ray"/>
    <property type="resolution" value="1.90 A"/>
    <property type="chains" value="A/B=100-151"/>
</dbReference>
<dbReference type="PDB" id="8Y47">
    <property type="method" value="X-ray"/>
    <property type="resolution" value="2.00 A"/>
    <property type="chains" value="A=272-496"/>
</dbReference>
<dbReference type="PDBsum" id="4DIX"/>
<dbReference type="PDBsum" id="4DJG"/>
<dbReference type="PDBsum" id="8Y47"/>
<dbReference type="SMR" id="O48791"/>
<dbReference type="FunCoup" id="O48791">
    <property type="interactions" value="1436"/>
</dbReference>
<dbReference type="IntAct" id="O48791">
    <property type="interactions" value="3"/>
</dbReference>
<dbReference type="STRING" id="3702.O48791"/>
<dbReference type="iPTMnet" id="O48791"/>
<dbReference type="PaxDb" id="3702-AT2G26770.1"/>
<dbReference type="ProteomicsDB" id="232902"/>
<dbReference type="EnsemblPlants" id="AT2G26770.1">
    <property type="protein sequence ID" value="AT2G26770.1"/>
    <property type="gene ID" value="AT2G26770"/>
</dbReference>
<dbReference type="EnsemblPlants" id="AT2G26770.2">
    <property type="protein sequence ID" value="AT2G26770.2"/>
    <property type="gene ID" value="AT2G26770"/>
</dbReference>
<dbReference type="EnsemblPlants" id="AT2G26770.3">
    <property type="protein sequence ID" value="AT2G26770.3"/>
    <property type="gene ID" value="AT2G26770"/>
</dbReference>
<dbReference type="GeneID" id="817218"/>
<dbReference type="Gramene" id="AT2G26770.1">
    <property type="protein sequence ID" value="AT2G26770.1"/>
    <property type="gene ID" value="AT2G26770"/>
</dbReference>
<dbReference type="Gramene" id="AT2G26770.2">
    <property type="protein sequence ID" value="AT2G26770.2"/>
    <property type="gene ID" value="AT2G26770"/>
</dbReference>
<dbReference type="Gramene" id="AT2G26770.3">
    <property type="protein sequence ID" value="AT2G26770.3"/>
    <property type="gene ID" value="AT2G26770"/>
</dbReference>
<dbReference type="KEGG" id="ath:AT2G26770"/>
<dbReference type="Araport" id="AT2G26770"/>
<dbReference type="TAIR" id="AT2G26770">
    <property type="gene designation" value="SCAB1"/>
</dbReference>
<dbReference type="eggNOG" id="ENOG502QQJ6">
    <property type="taxonomic scope" value="Eukaryota"/>
</dbReference>
<dbReference type="HOGENOM" id="CLU_026412_2_0_1"/>
<dbReference type="InParanoid" id="O48791"/>
<dbReference type="OMA" id="RIGANNQ"/>
<dbReference type="PhylomeDB" id="O48791"/>
<dbReference type="EvolutionaryTrace" id="O48791"/>
<dbReference type="PRO" id="PR:O48791"/>
<dbReference type="Proteomes" id="UP000006548">
    <property type="component" value="Chromosome 2"/>
</dbReference>
<dbReference type="ExpressionAtlas" id="O48791">
    <property type="expression patterns" value="baseline and differential"/>
</dbReference>
<dbReference type="GO" id="GO:0005737">
    <property type="term" value="C:cytoplasm"/>
    <property type="evidence" value="ECO:0007669"/>
    <property type="project" value="UniProtKB-KW"/>
</dbReference>
<dbReference type="GO" id="GO:0005856">
    <property type="term" value="C:cytoskeleton"/>
    <property type="evidence" value="ECO:0007669"/>
    <property type="project" value="UniProtKB-SubCell"/>
</dbReference>
<dbReference type="GO" id="GO:0003779">
    <property type="term" value="F:actin binding"/>
    <property type="evidence" value="ECO:0000314"/>
    <property type="project" value="TAIR"/>
</dbReference>
<dbReference type="GO" id="GO:0007015">
    <property type="term" value="P:actin filament organization"/>
    <property type="evidence" value="ECO:0000315"/>
    <property type="project" value="TAIR"/>
</dbReference>
<dbReference type="GO" id="GO:0010119">
    <property type="term" value="P:regulation of stomatal movement"/>
    <property type="evidence" value="ECO:0000315"/>
    <property type="project" value="TAIR"/>
</dbReference>
<dbReference type="CDD" id="cd13232">
    <property type="entry name" value="Ig-PH_SCAB1"/>
    <property type="match status" value="1"/>
</dbReference>
<dbReference type="CDD" id="cd11675">
    <property type="entry name" value="SCAB1_middle"/>
    <property type="match status" value="1"/>
</dbReference>
<dbReference type="FunFam" id="1.20.5.440:FF:000004">
    <property type="entry name" value="Stomatal closure-related actin-binding protein"/>
    <property type="match status" value="1"/>
</dbReference>
<dbReference type="Gene3D" id="2.30.29.140">
    <property type="match status" value="1"/>
</dbReference>
<dbReference type="Gene3D" id="2.60.40.2700">
    <property type="match status" value="1"/>
</dbReference>
<dbReference type="Gene3D" id="1.20.5.440">
    <property type="entry name" value="ATP synthase delta/epsilon subunit, C-terminal domain"/>
    <property type="match status" value="1"/>
</dbReference>
<dbReference type="InterPro" id="IPR039640">
    <property type="entry name" value="SCAB"/>
</dbReference>
<dbReference type="InterPro" id="IPR032012">
    <property type="entry name" value="SCAB-ABD"/>
</dbReference>
<dbReference type="InterPro" id="IPR032015">
    <property type="entry name" value="SCAB-Ig"/>
</dbReference>
<dbReference type="InterPro" id="IPR041144">
    <property type="entry name" value="SCAB-PH"/>
</dbReference>
<dbReference type="InterPro" id="IPR032009">
    <property type="entry name" value="SCAB_CC"/>
</dbReference>
<dbReference type="PANTHER" id="PTHR31172">
    <property type="entry name" value="STOMATAL CLOSURE-RELATED ACTIN-BINDING PROTEIN 1"/>
    <property type="match status" value="1"/>
</dbReference>
<dbReference type="PANTHER" id="PTHR31172:SF3">
    <property type="entry name" value="STOMATAL CLOSURE-RELATED ACTIN-BINDING PROTEIN 1"/>
    <property type="match status" value="1"/>
</dbReference>
<dbReference type="Pfam" id="PF16711">
    <property type="entry name" value="SCAB-ABD"/>
    <property type="match status" value="1"/>
</dbReference>
<dbReference type="Pfam" id="PF16709">
    <property type="entry name" value="SCAB-Ig"/>
    <property type="match status" value="1"/>
</dbReference>
<dbReference type="Pfam" id="PF17684">
    <property type="entry name" value="SCAB-PH"/>
    <property type="match status" value="1"/>
</dbReference>
<dbReference type="Pfam" id="PF16712">
    <property type="entry name" value="SCAB_CC"/>
    <property type="match status" value="1"/>
</dbReference>
<name>SCAB1_ARATH</name>
<organism evidence="8">
    <name type="scientific">Arabidopsis thaliana</name>
    <name type="common">Mouse-ear cress</name>
    <dbReference type="NCBI Taxonomy" id="3702"/>
    <lineage>
        <taxon>Eukaryota</taxon>
        <taxon>Viridiplantae</taxon>
        <taxon>Streptophyta</taxon>
        <taxon>Embryophyta</taxon>
        <taxon>Tracheophyta</taxon>
        <taxon>Spermatophyta</taxon>
        <taxon>Magnoliopsida</taxon>
        <taxon>eudicotyledons</taxon>
        <taxon>Gunneridae</taxon>
        <taxon>Pentapetalae</taxon>
        <taxon>rosids</taxon>
        <taxon>malvids</taxon>
        <taxon>Brassicales</taxon>
        <taxon>Brassicaceae</taxon>
        <taxon>Camelineae</taxon>
        <taxon>Arabidopsis</taxon>
    </lineage>
</organism>
<proteinExistence type="evidence at protein level"/>
<reference key="1">
    <citation type="journal article" date="1999" name="Nature">
        <title>Sequence and analysis of chromosome 2 of the plant Arabidopsis thaliana.</title>
        <authorList>
            <person name="Lin X."/>
            <person name="Kaul S."/>
            <person name="Rounsley S.D."/>
            <person name="Shea T.P."/>
            <person name="Benito M.-I."/>
            <person name="Town C.D."/>
            <person name="Fujii C.Y."/>
            <person name="Mason T.M."/>
            <person name="Bowman C.L."/>
            <person name="Barnstead M.E."/>
            <person name="Feldblyum T.V."/>
            <person name="Buell C.R."/>
            <person name="Ketchum K.A."/>
            <person name="Lee J.J."/>
            <person name="Ronning C.M."/>
            <person name="Koo H.L."/>
            <person name="Moffat K.S."/>
            <person name="Cronin L.A."/>
            <person name="Shen M."/>
            <person name="Pai G."/>
            <person name="Van Aken S."/>
            <person name="Umayam L."/>
            <person name="Tallon L.J."/>
            <person name="Gill J.E."/>
            <person name="Adams M.D."/>
            <person name="Carrera A.J."/>
            <person name="Creasy T.H."/>
            <person name="Goodman H.M."/>
            <person name="Somerville C.R."/>
            <person name="Copenhaver G.P."/>
            <person name="Preuss D."/>
            <person name="Nierman W.C."/>
            <person name="White O."/>
            <person name="Eisen J.A."/>
            <person name="Salzberg S.L."/>
            <person name="Fraser C.M."/>
            <person name="Venter J.C."/>
        </authorList>
    </citation>
    <scope>NUCLEOTIDE SEQUENCE [LARGE SCALE GENOMIC DNA]</scope>
    <source>
        <strain>cv. Columbia</strain>
    </source>
</reference>
<reference key="2">
    <citation type="journal article" date="2017" name="Plant J.">
        <title>Araport11: a complete reannotation of the Arabidopsis thaliana reference genome.</title>
        <authorList>
            <person name="Cheng C.Y."/>
            <person name="Krishnakumar V."/>
            <person name="Chan A.P."/>
            <person name="Thibaud-Nissen F."/>
            <person name="Schobel S."/>
            <person name="Town C.D."/>
        </authorList>
    </citation>
    <scope>GENOME REANNOTATION</scope>
    <source>
        <strain>cv. Columbia</strain>
    </source>
</reference>
<reference key="3">
    <citation type="journal article" date="2003" name="Science">
        <title>Empirical analysis of transcriptional activity in the Arabidopsis genome.</title>
        <authorList>
            <person name="Yamada K."/>
            <person name="Lim J."/>
            <person name="Dale J.M."/>
            <person name="Chen H."/>
            <person name="Shinn P."/>
            <person name="Palm C.J."/>
            <person name="Southwick A.M."/>
            <person name="Wu H.C."/>
            <person name="Kim C.J."/>
            <person name="Nguyen M."/>
            <person name="Pham P.K."/>
            <person name="Cheuk R.F."/>
            <person name="Karlin-Newmann G."/>
            <person name="Liu S.X."/>
            <person name="Lam B."/>
            <person name="Sakano H."/>
            <person name="Wu T."/>
            <person name="Yu G."/>
            <person name="Miranda M."/>
            <person name="Quach H.L."/>
            <person name="Tripp M."/>
            <person name="Chang C.H."/>
            <person name="Lee J.M."/>
            <person name="Toriumi M.J."/>
            <person name="Chan M.M."/>
            <person name="Tang C.C."/>
            <person name="Onodera C.S."/>
            <person name="Deng J.M."/>
            <person name="Akiyama K."/>
            <person name="Ansari Y."/>
            <person name="Arakawa T."/>
            <person name="Banh J."/>
            <person name="Banno F."/>
            <person name="Bowser L."/>
            <person name="Brooks S.Y."/>
            <person name="Carninci P."/>
            <person name="Chao Q."/>
            <person name="Choy N."/>
            <person name="Enju A."/>
            <person name="Goldsmith A.D."/>
            <person name="Gurjal M."/>
            <person name="Hansen N.F."/>
            <person name="Hayashizaki Y."/>
            <person name="Johnson-Hopson C."/>
            <person name="Hsuan V.W."/>
            <person name="Iida K."/>
            <person name="Karnes M."/>
            <person name="Khan S."/>
            <person name="Koesema E."/>
            <person name="Ishida J."/>
            <person name="Jiang P.X."/>
            <person name="Jones T."/>
            <person name="Kawai J."/>
            <person name="Kamiya A."/>
            <person name="Meyers C."/>
            <person name="Nakajima M."/>
            <person name="Narusaka M."/>
            <person name="Seki M."/>
            <person name="Sakurai T."/>
            <person name="Satou M."/>
            <person name="Tamse R."/>
            <person name="Vaysberg M."/>
            <person name="Wallender E.K."/>
            <person name="Wong C."/>
            <person name="Yamamura Y."/>
            <person name="Yuan S."/>
            <person name="Shinozaki K."/>
            <person name="Davis R.W."/>
            <person name="Theologis A."/>
            <person name="Ecker J.R."/>
        </authorList>
    </citation>
    <scope>NUCLEOTIDE SEQUENCE [LARGE SCALE MRNA]</scope>
    <source>
        <strain>cv. Columbia</strain>
    </source>
</reference>
<reference key="4">
    <citation type="journal article" date="2002" name="Science">
        <title>Functional annotation of a full-length Arabidopsis cDNA collection.</title>
        <authorList>
            <person name="Seki M."/>
            <person name="Narusaka M."/>
            <person name="Kamiya A."/>
            <person name="Ishida J."/>
            <person name="Satou M."/>
            <person name="Sakurai T."/>
            <person name="Nakajima M."/>
            <person name="Enju A."/>
            <person name="Akiyama K."/>
            <person name="Oono Y."/>
            <person name="Muramatsu M."/>
            <person name="Hayashizaki Y."/>
            <person name="Kawai J."/>
            <person name="Carninci P."/>
            <person name="Itoh M."/>
            <person name="Ishii Y."/>
            <person name="Arakawa T."/>
            <person name="Shibata K."/>
            <person name="Shinagawa A."/>
            <person name="Shinozaki K."/>
        </authorList>
    </citation>
    <scope>NUCLEOTIDE SEQUENCE [LARGE SCALE MRNA]</scope>
    <source>
        <strain>cv. Columbia</strain>
    </source>
</reference>
<reference key="5">
    <citation type="journal article" date="2011" name="Plant Cell">
        <title>The plant-specific actin binding protein SCAB1 stabilizes actin filaments and regulates stomatal movement in Arabidopsis.</title>
        <authorList>
            <person name="Zhao Y."/>
            <person name="Zhao S."/>
            <person name="Mao T."/>
            <person name="Qu X."/>
            <person name="Cao W."/>
            <person name="Zhang L."/>
            <person name="Zhang W."/>
            <person name="He L."/>
            <person name="Li S."/>
            <person name="Ren S."/>
            <person name="Zhao J."/>
            <person name="Zhu G."/>
            <person name="Huang S."/>
            <person name="Ye K."/>
            <person name="Yuan M."/>
            <person name="Guo Y."/>
        </authorList>
    </citation>
    <scope>FUNCTION</scope>
    <scope>DISRUPTION PHENOTYPE</scope>
    <scope>TISSUE SPECIFICITY</scope>
    <scope>SUBCELLULAR LOCATION</scope>
    <scope>DOMAIN</scope>
    <scope>GENE FAMILY</scope>
</reference>
<reference key="6">
    <citation type="journal article" date="2012" name="J. Biol. Chem.">
        <title>Plant actin-binding protein SCAB1 is dimeric actin cross-linker with atypical pleckstrin homology domain.</title>
        <authorList>
            <person name="Zhang W."/>
            <person name="Zhao Y."/>
            <person name="Guo Y."/>
            <person name="Ye K."/>
        </authorList>
    </citation>
    <scope>X-RAY CRYSTALLOGRAPHY (1.70 ANGSTROMS) OF 272-496</scope>
    <scope>SUBUNIT</scope>
    <scope>FUNCTION</scope>
    <scope>MUTAGENESIS OF VAL-74; ARG-75; LEU-77; PHE-81; ALA-88; LEU-91; VAL-131; VAL-138; LEU-141; ARG-410; LYS-412 AND LYS-422</scope>
</reference>
<feature type="chain" id="PRO_0000431807" description="Stomatal closure-related actin-binding protein 1">
    <location>
        <begin position="1"/>
        <end position="496"/>
    </location>
</feature>
<feature type="coiled-coil region" evidence="1">
    <location>
        <begin position="126"/>
        <end position="269"/>
    </location>
</feature>
<feature type="mutagenesis site" description="Loss of actin-binding activity." evidence="3">
    <original>V</original>
    <variation>A</variation>
    <location>
        <position position="74"/>
    </location>
</feature>
<feature type="mutagenesis site" description="Loss of actin-binding activity." evidence="3">
    <original>R</original>
    <variation>E</variation>
    <location>
        <position position="75"/>
    </location>
</feature>
<feature type="mutagenesis site" description="No effect on actin-binding activity." evidence="3">
    <original>L</original>
    <variation>A</variation>
    <location>
        <position position="77"/>
    </location>
</feature>
<feature type="mutagenesis site" description="Loss of actin-binding activity." evidence="3">
    <original>F</original>
    <variation>A</variation>
    <location>
        <position position="81"/>
    </location>
</feature>
<feature type="mutagenesis site" description="No effect on actin-binding activity." evidence="3">
    <original>A</original>
    <variation>S</variation>
    <location>
        <position position="88"/>
    </location>
</feature>
<feature type="mutagenesis site" description="No effect on actin-binding activity." evidence="3">
    <original>L</original>
    <variation>A</variation>
    <location>
        <position position="91"/>
    </location>
</feature>
<feature type="mutagenesis site" description="Loss of dimerization and loss of actin-binding activity." evidence="3">
    <original>V</original>
    <variation>D</variation>
    <location>
        <position position="131"/>
    </location>
</feature>
<feature type="mutagenesis site" description="Loss of dimerization and loss of actin-binding activity." evidence="3">
    <original>V</original>
    <variation>D</variation>
    <location>
        <position position="138"/>
    </location>
</feature>
<feature type="mutagenesis site" description="Loss of dimerization and loss of actin-binding activity." evidence="3">
    <original>L</original>
    <variation>E</variation>
    <location>
        <position position="141"/>
    </location>
</feature>
<feature type="mutagenesis site" description="Loss of inositol phosphates binding." evidence="3">
    <original>R</original>
    <variation>N</variation>
    <location>
        <position position="410"/>
    </location>
</feature>
<feature type="mutagenesis site" description="Loss of inositol phosphates binding." evidence="3">
    <original>K</original>
    <variation>N</variation>
    <location>
        <position position="412"/>
    </location>
</feature>
<feature type="mutagenesis site" description="Loss of inositol phosphates binding." evidence="3">
    <original>K</original>
    <variation>N</variation>
    <location>
        <position position="422"/>
    </location>
</feature>
<feature type="helix" evidence="10">
    <location>
        <begin position="107"/>
        <end position="120"/>
    </location>
</feature>
<feature type="helix" evidence="10">
    <location>
        <begin position="125"/>
        <end position="146"/>
    </location>
</feature>
<feature type="strand" evidence="9">
    <location>
        <begin position="281"/>
        <end position="285"/>
    </location>
</feature>
<feature type="strand" evidence="9">
    <location>
        <begin position="293"/>
        <end position="299"/>
    </location>
</feature>
<feature type="helix" evidence="9">
    <location>
        <begin position="305"/>
        <end position="307"/>
    </location>
</feature>
<feature type="strand" evidence="9">
    <location>
        <begin position="308"/>
        <end position="315"/>
    </location>
</feature>
<feature type="strand" evidence="9">
    <location>
        <begin position="319"/>
        <end position="324"/>
    </location>
</feature>
<feature type="strand" evidence="9">
    <location>
        <begin position="330"/>
        <end position="333"/>
    </location>
</feature>
<feature type="helix" evidence="9">
    <location>
        <begin position="337"/>
        <end position="339"/>
    </location>
</feature>
<feature type="strand" evidence="9">
    <location>
        <begin position="344"/>
        <end position="350"/>
    </location>
</feature>
<feature type="strand" evidence="9">
    <location>
        <begin position="353"/>
        <end position="358"/>
    </location>
</feature>
<feature type="helix" evidence="9">
    <location>
        <begin position="369"/>
        <end position="377"/>
    </location>
</feature>
<feature type="strand" evidence="9">
    <location>
        <begin position="380"/>
        <end position="391"/>
    </location>
</feature>
<feature type="strand" evidence="9">
    <location>
        <begin position="401"/>
        <end position="415"/>
    </location>
</feature>
<feature type="strand" evidence="9">
    <location>
        <begin position="418"/>
        <end position="424"/>
    </location>
</feature>
<feature type="strand" evidence="9">
    <location>
        <begin position="430"/>
        <end position="433"/>
    </location>
</feature>
<feature type="helix" evidence="9">
    <location>
        <begin position="441"/>
        <end position="443"/>
    </location>
</feature>
<feature type="strand" evidence="9">
    <location>
        <begin position="444"/>
        <end position="450"/>
    </location>
</feature>
<feature type="strand" evidence="9">
    <location>
        <begin position="453"/>
        <end position="461"/>
    </location>
</feature>
<feature type="helix" evidence="9">
    <location>
        <begin position="462"/>
        <end position="478"/>
    </location>
</feature>